<dbReference type="EC" id="1.1.1.37" evidence="1"/>
<dbReference type="EMBL" id="AF236112">
    <property type="protein sequence ID" value="AAF43044.1"/>
    <property type="molecule type" value="Genomic_DNA"/>
</dbReference>
<dbReference type="EMBL" id="DQ851095">
    <property type="protein sequence ID" value="ABH10498.1"/>
    <property type="molecule type" value="Genomic_DNA"/>
</dbReference>
<dbReference type="EMBL" id="CP001956">
    <property type="protein sequence ID" value="ADE04975.1"/>
    <property type="molecule type" value="Genomic_DNA"/>
</dbReference>
<dbReference type="RefSeq" id="WP_004044925.1">
    <property type="nucleotide sequence ID" value="NC_013967.1"/>
</dbReference>
<dbReference type="PDB" id="4BGU">
    <property type="method" value="X-ray"/>
    <property type="resolution" value="1.49 A"/>
    <property type="chains" value="A/B/C/D=2-304"/>
</dbReference>
<dbReference type="PDBsum" id="4BGU"/>
<dbReference type="SMR" id="Q9P9L2"/>
<dbReference type="STRING" id="309800.HVO_3007"/>
<dbReference type="PaxDb" id="309800-C498_18200"/>
<dbReference type="EnsemblBacteria" id="ADE04975">
    <property type="protein sequence ID" value="ADE04975"/>
    <property type="gene ID" value="HVO_3007"/>
</dbReference>
<dbReference type="GeneID" id="8925993"/>
<dbReference type="KEGG" id="hvo:HVO_3007"/>
<dbReference type="eggNOG" id="arCOG00246">
    <property type="taxonomic scope" value="Archaea"/>
</dbReference>
<dbReference type="HOGENOM" id="CLU_045401_1_1_2"/>
<dbReference type="OrthoDB" id="2596at2157"/>
<dbReference type="EvolutionaryTrace" id="Q9P9L2"/>
<dbReference type="Proteomes" id="UP000008243">
    <property type="component" value="Chromosome"/>
</dbReference>
<dbReference type="GO" id="GO:0004459">
    <property type="term" value="F:L-lactate dehydrogenase activity"/>
    <property type="evidence" value="ECO:0007669"/>
    <property type="project" value="TreeGrafter"/>
</dbReference>
<dbReference type="GO" id="GO:0030060">
    <property type="term" value="F:L-malate dehydrogenase (NAD+) activity"/>
    <property type="evidence" value="ECO:0007669"/>
    <property type="project" value="UniProtKB-EC"/>
</dbReference>
<dbReference type="GO" id="GO:0006089">
    <property type="term" value="P:lactate metabolic process"/>
    <property type="evidence" value="ECO:0007669"/>
    <property type="project" value="TreeGrafter"/>
</dbReference>
<dbReference type="GO" id="GO:0006099">
    <property type="term" value="P:tricarboxylic acid cycle"/>
    <property type="evidence" value="ECO:0007669"/>
    <property type="project" value="UniProtKB-KW"/>
</dbReference>
<dbReference type="Gene3D" id="3.90.110.10">
    <property type="entry name" value="Lactate dehydrogenase/glycoside hydrolase, family 4, C-terminal"/>
    <property type="match status" value="1"/>
</dbReference>
<dbReference type="Gene3D" id="3.40.50.720">
    <property type="entry name" value="NAD(P)-binding Rossmann-like Domain"/>
    <property type="match status" value="1"/>
</dbReference>
<dbReference type="InterPro" id="IPR001557">
    <property type="entry name" value="L-lactate/malate_DH"/>
</dbReference>
<dbReference type="InterPro" id="IPR022383">
    <property type="entry name" value="Lactate/malate_DH_C"/>
</dbReference>
<dbReference type="InterPro" id="IPR001236">
    <property type="entry name" value="Lactate/malate_DH_N"/>
</dbReference>
<dbReference type="InterPro" id="IPR015955">
    <property type="entry name" value="Lactate_DH/Glyco_Ohase_4_C"/>
</dbReference>
<dbReference type="InterPro" id="IPR053411">
    <property type="entry name" value="MDH"/>
</dbReference>
<dbReference type="InterPro" id="IPR036291">
    <property type="entry name" value="NAD(P)-bd_dom_sf"/>
</dbReference>
<dbReference type="NCBIfam" id="NF041314">
    <property type="entry name" value="Malate_DH_Halo"/>
    <property type="match status" value="1"/>
</dbReference>
<dbReference type="NCBIfam" id="NF004863">
    <property type="entry name" value="PRK06223.1"/>
    <property type="match status" value="1"/>
</dbReference>
<dbReference type="PANTHER" id="PTHR43128">
    <property type="entry name" value="L-2-HYDROXYCARBOXYLATE DEHYDROGENASE (NAD(P)(+))"/>
    <property type="match status" value="1"/>
</dbReference>
<dbReference type="PANTHER" id="PTHR43128:SF16">
    <property type="entry name" value="L-LACTATE DEHYDROGENASE"/>
    <property type="match status" value="1"/>
</dbReference>
<dbReference type="Pfam" id="PF02866">
    <property type="entry name" value="Ldh_1_C"/>
    <property type="match status" value="1"/>
</dbReference>
<dbReference type="Pfam" id="PF00056">
    <property type="entry name" value="Ldh_1_N"/>
    <property type="match status" value="1"/>
</dbReference>
<dbReference type="PIRSF" id="PIRSF000102">
    <property type="entry name" value="Lac_mal_DH"/>
    <property type="match status" value="1"/>
</dbReference>
<dbReference type="PRINTS" id="PR00086">
    <property type="entry name" value="LLDHDRGNASE"/>
</dbReference>
<dbReference type="SUPFAM" id="SSF56327">
    <property type="entry name" value="LDH C-terminal domain-like"/>
    <property type="match status" value="1"/>
</dbReference>
<dbReference type="SUPFAM" id="SSF51735">
    <property type="entry name" value="NAD(P)-binding Rossmann-fold domains"/>
    <property type="match status" value="1"/>
</dbReference>
<proteinExistence type="evidence at protein level"/>
<sequence>MTKVSVIGAAGTVGAAAGYNLALRDVCDELVFVDIPKMEDKTVGQAADTNHGIAYDSNTVVTQGGYEDTAGSDVVVITAGIPRQPGQTRIDLAGDNAPIMDDIGSSLAEYNDDFVSITTSNPVDLLNRHLYETGDRDRHKVIGFGGRLDSARFRYVLSQRFDVPVKNVDATILGEHGDAQVPVFSKVRVDGNDPAFSADEKEEILGDLQESAMDVIERKGATQWGPATGVAHMVEAVLHDTGEVLPGSLVLDGEFGYEDTAFGVPVKLGSNGIEEVVEWDLDDYEADLMDDAAEKLRDQYDEIA</sequence>
<protein>
    <recommendedName>
        <fullName evidence="1">Malate dehydrogenase</fullName>
        <ecNumber evidence="1">1.1.1.37</ecNumber>
    </recommendedName>
</protein>
<evidence type="ECO:0000250" key="1">
    <source>
        <dbReference type="UniProtKB" id="O08349"/>
    </source>
</evidence>
<evidence type="ECO:0000250" key="2">
    <source>
        <dbReference type="UniProtKB" id="P61889"/>
    </source>
</evidence>
<evidence type="ECO:0000305" key="3"/>
<evidence type="ECO:0007829" key="4">
    <source>
        <dbReference type="PDB" id="4BGU"/>
    </source>
</evidence>
<reference key="1">
    <citation type="submission" date="2000-02" db="EMBL/GenBank/DDBJ databases">
        <title>The gene coding for Haloferax volcanii malate dehydrogenase.</title>
        <authorList>
            <person name="Mevarech M."/>
        </authorList>
    </citation>
    <scope>NUCLEOTIDE SEQUENCE [GENOMIC DNA]</scope>
</reference>
<reference key="2">
    <citation type="submission" date="2006-07" db="EMBL/GenBank/DDBJ databases">
        <title>Expression of halophilic malate dehydrogenase of Haloferax volcanii.</title>
        <authorList>
            <person name="Tetsch L."/>
            <person name="Galinski E.A."/>
        </authorList>
    </citation>
    <scope>NUCLEOTIDE SEQUENCE [GENOMIC DNA]</scope>
    <source>
        <strain>ATCC 29605 / DSM 3757 / JCM 8879 / NBRC 14742 / NCIMB 2012 / VKM B-1768 / DS2</strain>
    </source>
</reference>
<reference key="3">
    <citation type="journal article" date="2010" name="PLoS ONE">
        <title>The complete genome sequence of Haloferax volcanii DS2, a model archaeon.</title>
        <authorList>
            <person name="Hartman A.L."/>
            <person name="Norais C."/>
            <person name="Badger J.H."/>
            <person name="Delmas S."/>
            <person name="Haldenby S."/>
            <person name="Madupu R."/>
            <person name="Robinson J."/>
            <person name="Khouri H."/>
            <person name="Ren Q."/>
            <person name="Lowe T.M."/>
            <person name="Maupin-Furlow J."/>
            <person name="Pohlschroder M."/>
            <person name="Daniels C."/>
            <person name="Pfeiffer F."/>
            <person name="Allers T."/>
            <person name="Eisen J.A."/>
        </authorList>
    </citation>
    <scope>NUCLEOTIDE SEQUENCE [LARGE SCALE GENOMIC DNA]</scope>
    <source>
        <strain>ATCC 29605 / DSM 3757 / JCM 8879 / NBRC 14742 / NCIMB 2012 / VKM B-1768 / DS2</strain>
    </source>
</reference>
<feature type="chain" id="PRO_0000113483" description="Malate dehydrogenase">
    <location>
        <begin position="1"/>
        <end position="304"/>
    </location>
</feature>
<feature type="active site" description="Proton acceptor" evidence="2">
    <location>
        <position position="176"/>
    </location>
</feature>
<feature type="binding site" evidence="1">
    <location>
        <begin position="8"/>
        <end position="14"/>
    </location>
    <ligand>
        <name>NAD(+)</name>
        <dbReference type="ChEBI" id="CHEBI:57540"/>
    </ligand>
</feature>
<feature type="binding site" evidence="1">
    <location>
        <position position="34"/>
    </location>
    <ligand>
        <name>NAD(+)</name>
        <dbReference type="ChEBI" id="CHEBI:57540"/>
    </ligand>
</feature>
<feature type="binding site" evidence="2">
    <location>
        <position position="83"/>
    </location>
    <ligand>
        <name>substrate</name>
    </ligand>
</feature>
<feature type="binding site" evidence="2">
    <location>
        <position position="89"/>
    </location>
    <ligand>
        <name>substrate</name>
    </ligand>
</feature>
<feature type="binding site" evidence="1">
    <location>
        <position position="96"/>
    </location>
    <ligand>
        <name>NAD(+)</name>
        <dbReference type="ChEBI" id="CHEBI:57540"/>
    </ligand>
</feature>
<feature type="binding site" evidence="1">
    <location>
        <begin position="119"/>
        <end position="121"/>
    </location>
    <ligand>
        <name>NAD(+)</name>
        <dbReference type="ChEBI" id="CHEBI:57540"/>
    </ligand>
</feature>
<feature type="binding site" evidence="2">
    <location>
        <position position="121"/>
    </location>
    <ligand>
        <name>substrate</name>
    </ligand>
</feature>
<feature type="binding site" evidence="2">
    <location>
        <position position="152"/>
    </location>
    <ligand>
        <name>substrate</name>
    </ligand>
</feature>
<feature type="sequence conflict" description="In Ref. 1; AAF43044." evidence="3" ref="1">
    <original>A</original>
    <variation>G</variation>
    <location>
        <position position="17"/>
    </location>
</feature>
<feature type="sequence conflict" description="In Ref. 1; AAF43044." evidence="3" ref="1">
    <location>
        <position position="285"/>
    </location>
</feature>
<feature type="sequence conflict" description="In Ref. 1; AAF43044." evidence="3" ref="1">
    <original>D</original>
    <variation>N</variation>
    <location>
        <position position="290"/>
    </location>
</feature>
<feature type="sequence conflict" description="In Ref. 1; AAF43044." evidence="3" ref="1">
    <original>R</original>
    <variation>L</variation>
    <location>
        <position position="297"/>
    </location>
</feature>
<feature type="strand" evidence="4">
    <location>
        <begin position="3"/>
        <end position="8"/>
    </location>
</feature>
<feature type="helix" evidence="4">
    <location>
        <begin position="12"/>
        <end position="24"/>
    </location>
</feature>
<feature type="strand" evidence="4">
    <location>
        <begin position="28"/>
        <end position="33"/>
    </location>
</feature>
<feature type="helix" evidence="4">
    <location>
        <begin position="36"/>
        <end position="38"/>
    </location>
</feature>
<feature type="helix" evidence="4">
    <location>
        <begin position="39"/>
        <end position="53"/>
    </location>
</feature>
<feature type="turn" evidence="4">
    <location>
        <begin position="54"/>
        <end position="56"/>
    </location>
</feature>
<feature type="strand" evidence="4">
    <location>
        <begin position="60"/>
        <end position="63"/>
    </location>
</feature>
<feature type="helix" evidence="4">
    <location>
        <begin position="66"/>
        <end position="69"/>
    </location>
</feature>
<feature type="strand" evidence="4">
    <location>
        <begin position="73"/>
        <end position="77"/>
    </location>
</feature>
<feature type="helix" evidence="4">
    <location>
        <begin position="89"/>
        <end position="108"/>
    </location>
</feature>
<feature type="strand" evidence="4">
    <location>
        <begin position="115"/>
        <end position="118"/>
    </location>
</feature>
<feature type="helix" evidence="4">
    <location>
        <begin position="123"/>
        <end position="132"/>
    </location>
</feature>
<feature type="strand" evidence="4">
    <location>
        <begin position="134"/>
        <end position="136"/>
    </location>
</feature>
<feature type="helix" evidence="4">
    <location>
        <begin position="138"/>
        <end position="140"/>
    </location>
</feature>
<feature type="strand" evidence="4">
    <location>
        <begin position="141"/>
        <end position="143"/>
    </location>
</feature>
<feature type="helix" evidence="4">
    <location>
        <begin position="146"/>
        <end position="161"/>
    </location>
</feature>
<feature type="helix" evidence="4">
    <location>
        <begin position="165"/>
        <end position="167"/>
    </location>
</feature>
<feature type="strand" evidence="4">
    <location>
        <begin position="172"/>
        <end position="174"/>
    </location>
</feature>
<feature type="strand" evidence="4">
    <location>
        <begin position="180"/>
        <end position="182"/>
    </location>
</feature>
<feature type="helix" evidence="4">
    <location>
        <begin position="184"/>
        <end position="186"/>
    </location>
</feature>
<feature type="helix" evidence="4">
    <location>
        <begin position="198"/>
        <end position="216"/>
    </location>
</feature>
<feature type="turn" evidence="4">
    <location>
        <begin position="217"/>
        <end position="219"/>
    </location>
</feature>
<feature type="helix" evidence="4">
    <location>
        <begin position="224"/>
        <end position="238"/>
    </location>
</feature>
<feature type="strand" evidence="4">
    <location>
        <begin position="244"/>
        <end position="253"/>
    </location>
</feature>
<feature type="helix" evidence="4">
    <location>
        <begin position="254"/>
        <end position="256"/>
    </location>
</feature>
<feature type="strand" evidence="4">
    <location>
        <begin position="258"/>
        <end position="269"/>
    </location>
</feature>
<feature type="strand" evidence="4">
    <location>
        <begin position="272"/>
        <end position="276"/>
    </location>
</feature>
<feature type="helix" evidence="4">
    <location>
        <begin position="283"/>
        <end position="303"/>
    </location>
</feature>
<gene>
    <name type="primary">mdh</name>
    <name type="ordered locus">HVO_3007</name>
</gene>
<comment type="function">
    <text evidence="1">Catalyzes the reversible oxidation of malate to oxaloacetate.</text>
</comment>
<comment type="catalytic activity">
    <reaction evidence="1">
        <text>(S)-malate + NAD(+) = oxaloacetate + NADH + H(+)</text>
        <dbReference type="Rhea" id="RHEA:21432"/>
        <dbReference type="ChEBI" id="CHEBI:15378"/>
        <dbReference type="ChEBI" id="CHEBI:15589"/>
        <dbReference type="ChEBI" id="CHEBI:16452"/>
        <dbReference type="ChEBI" id="CHEBI:57540"/>
        <dbReference type="ChEBI" id="CHEBI:57945"/>
        <dbReference type="EC" id="1.1.1.37"/>
    </reaction>
</comment>
<comment type="similarity">
    <text evidence="3">Belongs to the LDH/MDH superfamily.</text>
</comment>
<keyword id="KW-0002">3D-structure</keyword>
<keyword id="KW-0520">NAD</keyword>
<keyword id="KW-0560">Oxidoreductase</keyword>
<keyword id="KW-1185">Reference proteome</keyword>
<keyword id="KW-0816">Tricarboxylic acid cycle</keyword>
<accession>Q9P9L2</accession>
<accession>D4GYB6</accession>
<accession>Q0MSE3</accession>
<organism>
    <name type="scientific">Haloferax volcanii (strain ATCC 29605 / DSM 3757 / JCM 8879 / NBRC 14742 / NCIMB 2012 / VKM B-1768 / DS2)</name>
    <name type="common">Halobacterium volcanii</name>
    <dbReference type="NCBI Taxonomy" id="309800"/>
    <lineage>
        <taxon>Archaea</taxon>
        <taxon>Methanobacteriati</taxon>
        <taxon>Methanobacteriota</taxon>
        <taxon>Stenosarchaea group</taxon>
        <taxon>Halobacteria</taxon>
        <taxon>Halobacteriales</taxon>
        <taxon>Haloferacaceae</taxon>
        <taxon>Haloferax</taxon>
    </lineage>
</organism>
<name>MDH_HALVD</name>